<name>MTNW_BACC7</name>
<evidence type="ECO:0000255" key="1">
    <source>
        <dbReference type="HAMAP-Rule" id="MF_01679"/>
    </source>
</evidence>
<keyword id="KW-0028">Amino-acid biosynthesis</keyword>
<keyword id="KW-0413">Isomerase</keyword>
<keyword id="KW-0460">Magnesium</keyword>
<keyword id="KW-0479">Metal-binding</keyword>
<keyword id="KW-0486">Methionine biosynthesis</keyword>
<comment type="function">
    <text evidence="1">Catalyzes the enolization of 2,3-diketo-5-methylthiopentyl-1-phosphate (DK-MTP-1-P) into 2-hydroxy-3-keto-5-methylthiopentenyl-1-phosphate (HK-MTPenyl-1-P).</text>
</comment>
<comment type="catalytic activity">
    <reaction evidence="1">
        <text>5-methylsulfanyl-2,3-dioxopentyl phosphate = 2-hydroxy-5-methylsulfanyl-3-oxopent-1-enyl phosphate</text>
        <dbReference type="Rhea" id="RHEA:18769"/>
        <dbReference type="ChEBI" id="CHEBI:58828"/>
        <dbReference type="ChEBI" id="CHEBI:59505"/>
        <dbReference type="EC" id="5.3.2.5"/>
    </reaction>
</comment>
<comment type="cofactor">
    <cofactor evidence="1">
        <name>Mg(2+)</name>
        <dbReference type="ChEBI" id="CHEBI:18420"/>
    </cofactor>
    <text evidence="1">Binds 1 Mg(2+) ion per subunit.</text>
</comment>
<comment type="pathway">
    <text evidence="1">Amino-acid biosynthesis; L-methionine biosynthesis via salvage pathway; L-methionine from S-methyl-5-thio-alpha-D-ribose 1-phosphate: step 3/6.</text>
</comment>
<comment type="subunit">
    <text evidence="1">Homodimer.</text>
</comment>
<comment type="miscellaneous">
    <text evidence="1">Has no RuBP-carboxylation activity.</text>
</comment>
<comment type="similarity">
    <text evidence="1">Belongs to the RuBisCO large chain family. Type IV subfamily.</text>
</comment>
<accession>B7HN14</accession>
<dbReference type="EC" id="5.3.2.5" evidence="1"/>
<dbReference type="EMBL" id="CP001177">
    <property type="protein sequence ID" value="ACJ78059.1"/>
    <property type="molecule type" value="Genomic_DNA"/>
</dbReference>
<dbReference type="SMR" id="B7HN14"/>
<dbReference type="KEGG" id="bcr:BCAH187_A4167"/>
<dbReference type="HOGENOM" id="CLU_031450_3_1_9"/>
<dbReference type="UniPathway" id="UPA00904">
    <property type="reaction ID" value="UER00876"/>
</dbReference>
<dbReference type="Proteomes" id="UP000002214">
    <property type="component" value="Chromosome"/>
</dbReference>
<dbReference type="GO" id="GO:0043715">
    <property type="term" value="F:2,3-diketo-5-methylthiopentyl-1-phosphate enolase activity"/>
    <property type="evidence" value="ECO:0007669"/>
    <property type="project" value="UniProtKB-UniRule"/>
</dbReference>
<dbReference type="GO" id="GO:0000287">
    <property type="term" value="F:magnesium ion binding"/>
    <property type="evidence" value="ECO:0007669"/>
    <property type="project" value="UniProtKB-UniRule"/>
</dbReference>
<dbReference type="GO" id="GO:0016984">
    <property type="term" value="F:ribulose-bisphosphate carboxylase activity"/>
    <property type="evidence" value="ECO:0007669"/>
    <property type="project" value="InterPro"/>
</dbReference>
<dbReference type="GO" id="GO:0015977">
    <property type="term" value="P:carbon fixation"/>
    <property type="evidence" value="ECO:0007669"/>
    <property type="project" value="InterPro"/>
</dbReference>
<dbReference type="GO" id="GO:0019509">
    <property type="term" value="P:L-methionine salvage from methylthioadenosine"/>
    <property type="evidence" value="ECO:0007669"/>
    <property type="project" value="UniProtKB-UniRule"/>
</dbReference>
<dbReference type="CDD" id="cd08209">
    <property type="entry name" value="RLP_DK-MTP-1-P-enolase"/>
    <property type="match status" value="1"/>
</dbReference>
<dbReference type="FunFam" id="3.20.20.110:FF:000002">
    <property type="entry name" value="2,3-diketo-5-methylthiopentyl-1-phosphate enolase"/>
    <property type="match status" value="1"/>
</dbReference>
<dbReference type="Gene3D" id="3.20.20.110">
    <property type="entry name" value="Ribulose bisphosphate carboxylase, large subunit, C-terminal domain"/>
    <property type="match status" value="1"/>
</dbReference>
<dbReference type="Gene3D" id="3.30.70.150">
    <property type="entry name" value="RuBisCO large subunit, N-terminal domain"/>
    <property type="match status" value="1"/>
</dbReference>
<dbReference type="HAMAP" id="MF_01679">
    <property type="entry name" value="Salvage_MtnW"/>
    <property type="match status" value="1"/>
</dbReference>
<dbReference type="InterPro" id="IPR017717">
    <property type="entry name" value="Diketo-Methiopentyl-P_enolase"/>
</dbReference>
<dbReference type="InterPro" id="IPR033966">
    <property type="entry name" value="RuBisCO"/>
</dbReference>
<dbReference type="InterPro" id="IPR000685">
    <property type="entry name" value="RuBisCO_lsu_C"/>
</dbReference>
<dbReference type="InterPro" id="IPR036376">
    <property type="entry name" value="RuBisCO_lsu_C_sf"/>
</dbReference>
<dbReference type="InterPro" id="IPR017443">
    <property type="entry name" value="RuBisCO_lsu_fd_N"/>
</dbReference>
<dbReference type="InterPro" id="IPR036422">
    <property type="entry name" value="RuBisCO_lsu_N_sf"/>
</dbReference>
<dbReference type="NCBIfam" id="NF007095">
    <property type="entry name" value="PRK09549.1"/>
    <property type="match status" value="1"/>
</dbReference>
<dbReference type="NCBIfam" id="TIGR03332">
    <property type="entry name" value="salvage_mtnW"/>
    <property type="match status" value="1"/>
</dbReference>
<dbReference type="PANTHER" id="PTHR42704">
    <property type="entry name" value="RIBULOSE BISPHOSPHATE CARBOXYLASE"/>
    <property type="match status" value="1"/>
</dbReference>
<dbReference type="PANTHER" id="PTHR42704:SF17">
    <property type="entry name" value="RIBULOSE BISPHOSPHATE CARBOXYLASE LARGE CHAIN"/>
    <property type="match status" value="1"/>
</dbReference>
<dbReference type="Pfam" id="PF00016">
    <property type="entry name" value="RuBisCO_large"/>
    <property type="match status" value="1"/>
</dbReference>
<dbReference type="Pfam" id="PF02788">
    <property type="entry name" value="RuBisCO_large_N"/>
    <property type="match status" value="1"/>
</dbReference>
<dbReference type="SFLD" id="SFLDF00157">
    <property type="entry name" value="2_3-diketo-5-methylthiopentyl"/>
    <property type="match status" value="1"/>
</dbReference>
<dbReference type="SFLD" id="SFLDS00014">
    <property type="entry name" value="RuBisCO"/>
    <property type="match status" value="1"/>
</dbReference>
<dbReference type="SUPFAM" id="SSF51649">
    <property type="entry name" value="RuBisCo, C-terminal domain"/>
    <property type="match status" value="1"/>
</dbReference>
<dbReference type="SUPFAM" id="SSF54966">
    <property type="entry name" value="RuBisCO, large subunit, small (N-terminal) domain"/>
    <property type="match status" value="1"/>
</dbReference>
<protein>
    <recommendedName>
        <fullName evidence="1">2,3-diketo-5-methylthiopentyl-1-phosphate enolase</fullName>
        <shortName evidence="1">DK-MTP-1-P enolase</shortName>
        <ecNumber evidence="1">5.3.2.5</ecNumber>
    </recommendedName>
    <alternativeName>
        <fullName evidence="1">RuBisCO-like protein</fullName>
        <shortName evidence="1">RLP</shortName>
    </alternativeName>
</protein>
<organism>
    <name type="scientific">Bacillus cereus (strain AH187)</name>
    <dbReference type="NCBI Taxonomy" id="405534"/>
    <lineage>
        <taxon>Bacteria</taxon>
        <taxon>Bacillati</taxon>
        <taxon>Bacillota</taxon>
        <taxon>Bacilli</taxon>
        <taxon>Bacillales</taxon>
        <taxon>Bacillaceae</taxon>
        <taxon>Bacillus</taxon>
        <taxon>Bacillus cereus group</taxon>
    </lineage>
</organism>
<sequence length="414" mass="45483">MSGIIATYLIHDDSHNLEKKAEQIALGLTIGSWTHLPHLLQEQLKQHKGNVIHVEELAEHEHTNSYLRKKVKRGIIKIEYPLLNFSPDLPAILTTTFGKLSLDGEVKLIDLTFSDELKKHFPGPKFGIDGIRNLLQVHDRPLLMSIFKGMIGRNIGYLKTQLRDQAIGGVDIVKDDEILFENALTPLTKRIVSGKEVLQSVYETYGHKTLYAVNLTGRTFDLKENAKRAVQAGADILLFNVFSYGLDVLQSLAEDDEIPVPIMAHPAVSGAYSASKLYGVSSPLLLGKLLRYAGADFSLFPSPYGSVALEKEEALAISKYLTEDDAFFKKSFSVPSAGIHPGFVPFIVRDFGKDVVINAGGGIHGHPNGAQGGGKAFRAAIDATLQNKPLHEVDDINLHSALQIWGNPSHEVKL</sequence>
<proteinExistence type="inferred from homology"/>
<gene>
    <name evidence="1" type="primary">mtnW</name>
    <name type="ordered locus">BCAH187_A4167</name>
</gene>
<reference key="1">
    <citation type="submission" date="2008-10" db="EMBL/GenBank/DDBJ databases">
        <title>Genome sequence of Bacillus cereus AH187.</title>
        <authorList>
            <person name="Dodson R.J."/>
            <person name="Durkin A.S."/>
            <person name="Rosovitz M.J."/>
            <person name="Rasko D.A."/>
            <person name="Kolsto A.B."/>
            <person name="Okstad O.A."/>
            <person name="Ravel J."/>
            <person name="Sutton G."/>
        </authorList>
    </citation>
    <scope>NUCLEOTIDE SEQUENCE [LARGE SCALE GENOMIC DNA]</scope>
    <source>
        <strain>AH187</strain>
    </source>
</reference>
<feature type="chain" id="PRO_1000187379" description="2,3-diketo-5-methylthiopentyl-1-phosphate enolase">
    <location>
        <begin position="1"/>
        <end position="414"/>
    </location>
</feature>
<feature type="active site" description="Proton acceptor" evidence="1">
    <location>
        <position position="99"/>
    </location>
</feature>
<feature type="binding site" evidence="1">
    <location>
        <position position="148"/>
    </location>
    <ligand>
        <name>substrate</name>
    </ligand>
</feature>
<feature type="binding site" evidence="1">
    <location>
        <begin position="174"/>
        <end position="177"/>
    </location>
    <ligand>
        <name>substrate</name>
    </ligand>
</feature>
<feature type="binding site" description="via carbamate group" evidence="1">
    <location>
        <position position="174"/>
    </location>
    <ligand>
        <name>Mg(2+)</name>
        <dbReference type="ChEBI" id="CHEBI:18420"/>
    </ligand>
</feature>
<feature type="binding site" evidence="1">
    <location>
        <position position="176"/>
    </location>
    <ligand>
        <name>Mg(2+)</name>
        <dbReference type="ChEBI" id="CHEBI:18420"/>
    </ligand>
</feature>
<feature type="binding site" evidence="1">
    <location>
        <position position="177"/>
    </location>
    <ligand>
        <name>Mg(2+)</name>
        <dbReference type="ChEBI" id="CHEBI:18420"/>
    </ligand>
</feature>
<feature type="binding site" evidence="1">
    <location>
        <position position="265"/>
    </location>
    <ligand>
        <name>substrate</name>
    </ligand>
</feature>
<feature type="binding site" evidence="1">
    <location>
        <position position="338"/>
    </location>
    <ligand>
        <name>substrate</name>
    </ligand>
</feature>
<feature type="binding site" evidence="1">
    <location>
        <begin position="360"/>
        <end position="361"/>
    </location>
    <ligand>
        <name>substrate</name>
    </ligand>
</feature>
<feature type="modified residue" description="N6-carboxylysine" evidence="1">
    <location>
        <position position="174"/>
    </location>
</feature>